<name>G6PI_ECOBW</name>
<comment type="function">
    <text evidence="1">Catalyzes the reversible isomerization of glucose-6-phosphate to fructose-6-phosphate.</text>
</comment>
<comment type="catalytic activity">
    <reaction evidence="1">
        <text>alpha-D-glucose 6-phosphate = beta-D-fructose 6-phosphate</text>
        <dbReference type="Rhea" id="RHEA:11816"/>
        <dbReference type="ChEBI" id="CHEBI:57634"/>
        <dbReference type="ChEBI" id="CHEBI:58225"/>
        <dbReference type="EC" id="5.3.1.9"/>
    </reaction>
</comment>
<comment type="pathway">
    <text evidence="1">Carbohydrate biosynthesis; gluconeogenesis.</text>
</comment>
<comment type="pathway">
    <text evidence="1">Carbohydrate degradation; glycolysis; D-glyceraldehyde 3-phosphate and glycerone phosphate from D-glucose: step 2/4.</text>
</comment>
<comment type="subcellular location">
    <subcellularLocation>
        <location evidence="1">Cytoplasm</location>
    </subcellularLocation>
</comment>
<comment type="similarity">
    <text evidence="1">Belongs to the GPI family.</text>
</comment>
<gene>
    <name evidence="1" type="primary">pgi</name>
    <name type="ordered locus">BWG_3681</name>
</gene>
<accession>C5A0W2</accession>
<reference key="1">
    <citation type="journal article" date="2009" name="J. Bacteriol.">
        <title>Genomic sequencing reveals regulatory mutations and recombinational events in the widely used MC4100 lineage of Escherichia coli K-12.</title>
        <authorList>
            <person name="Ferenci T."/>
            <person name="Zhou Z."/>
            <person name="Betteridge T."/>
            <person name="Ren Y."/>
            <person name="Liu Y."/>
            <person name="Feng L."/>
            <person name="Reeves P.R."/>
            <person name="Wang L."/>
        </authorList>
    </citation>
    <scope>NUCLEOTIDE SEQUENCE [LARGE SCALE GENOMIC DNA]</scope>
    <source>
        <strain>K12 / MC4100 / BW2952</strain>
    </source>
</reference>
<proteinExistence type="inferred from homology"/>
<dbReference type="EC" id="5.3.1.9" evidence="1"/>
<dbReference type="EMBL" id="CP001396">
    <property type="protein sequence ID" value="ACR63320.1"/>
    <property type="molecule type" value="Genomic_DNA"/>
</dbReference>
<dbReference type="RefSeq" id="WP_000789986.1">
    <property type="nucleotide sequence ID" value="NC_012759.1"/>
</dbReference>
<dbReference type="SMR" id="C5A0W2"/>
<dbReference type="GeneID" id="93777863"/>
<dbReference type="KEGG" id="ebw:BWG_3681"/>
<dbReference type="HOGENOM" id="CLU_017947_3_1_6"/>
<dbReference type="UniPathway" id="UPA00109">
    <property type="reaction ID" value="UER00181"/>
</dbReference>
<dbReference type="UniPathway" id="UPA00138"/>
<dbReference type="GO" id="GO:0005829">
    <property type="term" value="C:cytosol"/>
    <property type="evidence" value="ECO:0007669"/>
    <property type="project" value="TreeGrafter"/>
</dbReference>
<dbReference type="GO" id="GO:0097367">
    <property type="term" value="F:carbohydrate derivative binding"/>
    <property type="evidence" value="ECO:0007669"/>
    <property type="project" value="InterPro"/>
</dbReference>
<dbReference type="GO" id="GO:0004347">
    <property type="term" value="F:glucose-6-phosphate isomerase activity"/>
    <property type="evidence" value="ECO:0007669"/>
    <property type="project" value="UniProtKB-UniRule"/>
</dbReference>
<dbReference type="GO" id="GO:0048029">
    <property type="term" value="F:monosaccharide binding"/>
    <property type="evidence" value="ECO:0007669"/>
    <property type="project" value="TreeGrafter"/>
</dbReference>
<dbReference type="GO" id="GO:0006094">
    <property type="term" value="P:gluconeogenesis"/>
    <property type="evidence" value="ECO:0007669"/>
    <property type="project" value="UniProtKB-UniRule"/>
</dbReference>
<dbReference type="GO" id="GO:0051156">
    <property type="term" value="P:glucose 6-phosphate metabolic process"/>
    <property type="evidence" value="ECO:0007669"/>
    <property type="project" value="TreeGrafter"/>
</dbReference>
<dbReference type="GO" id="GO:0006096">
    <property type="term" value="P:glycolytic process"/>
    <property type="evidence" value="ECO:0007669"/>
    <property type="project" value="UniProtKB-UniRule"/>
</dbReference>
<dbReference type="CDD" id="cd05015">
    <property type="entry name" value="SIS_PGI_1"/>
    <property type="match status" value="1"/>
</dbReference>
<dbReference type="CDD" id="cd05016">
    <property type="entry name" value="SIS_PGI_2"/>
    <property type="match status" value="1"/>
</dbReference>
<dbReference type="FunFam" id="1.10.1390.10:FF:000001">
    <property type="entry name" value="Glucose-6-phosphate isomerase"/>
    <property type="match status" value="1"/>
</dbReference>
<dbReference type="FunFam" id="3.40.50.10490:FF:000004">
    <property type="entry name" value="Glucose-6-phosphate isomerase"/>
    <property type="match status" value="1"/>
</dbReference>
<dbReference type="Gene3D" id="1.10.1390.10">
    <property type="match status" value="1"/>
</dbReference>
<dbReference type="Gene3D" id="3.40.50.10490">
    <property type="entry name" value="Glucose-6-phosphate isomerase like protein, domain 1"/>
    <property type="match status" value="2"/>
</dbReference>
<dbReference type="HAMAP" id="MF_00473">
    <property type="entry name" value="G6P_isomerase"/>
    <property type="match status" value="1"/>
</dbReference>
<dbReference type="InterPro" id="IPR001672">
    <property type="entry name" value="G6P_Isomerase"/>
</dbReference>
<dbReference type="InterPro" id="IPR023096">
    <property type="entry name" value="G6P_Isomerase_C"/>
</dbReference>
<dbReference type="InterPro" id="IPR018189">
    <property type="entry name" value="Phosphoglucose_isomerase_CS"/>
</dbReference>
<dbReference type="InterPro" id="IPR046348">
    <property type="entry name" value="SIS_dom_sf"/>
</dbReference>
<dbReference type="InterPro" id="IPR035476">
    <property type="entry name" value="SIS_PGI_1"/>
</dbReference>
<dbReference type="InterPro" id="IPR035482">
    <property type="entry name" value="SIS_PGI_2"/>
</dbReference>
<dbReference type="NCBIfam" id="NF001211">
    <property type="entry name" value="PRK00179.1"/>
    <property type="match status" value="1"/>
</dbReference>
<dbReference type="PANTHER" id="PTHR11469">
    <property type="entry name" value="GLUCOSE-6-PHOSPHATE ISOMERASE"/>
    <property type="match status" value="1"/>
</dbReference>
<dbReference type="PANTHER" id="PTHR11469:SF1">
    <property type="entry name" value="GLUCOSE-6-PHOSPHATE ISOMERASE"/>
    <property type="match status" value="1"/>
</dbReference>
<dbReference type="Pfam" id="PF00342">
    <property type="entry name" value="PGI"/>
    <property type="match status" value="1"/>
</dbReference>
<dbReference type="PRINTS" id="PR00662">
    <property type="entry name" value="G6PISOMERASE"/>
</dbReference>
<dbReference type="SUPFAM" id="SSF53697">
    <property type="entry name" value="SIS domain"/>
    <property type="match status" value="1"/>
</dbReference>
<dbReference type="PROSITE" id="PS00765">
    <property type="entry name" value="P_GLUCOSE_ISOMERASE_1"/>
    <property type="match status" value="1"/>
</dbReference>
<dbReference type="PROSITE" id="PS00174">
    <property type="entry name" value="P_GLUCOSE_ISOMERASE_2"/>
    <property type="match status" value="1"/>
</dbReference>
<dbReference type="PROSITE" id="PS51463">
    <property type="entry name" value="P_GLUCOSE_ISOMERASE_3"/>
    <property type="match status" value="1"/>
</dbReference>
<protein>
    <recommendedName>
        <fullName evidence="1">Glucose-6-phosphate isomerase</fullName>
        <shortName evidence="1">GPI</shortName>
        <ecNumber evidence="1">5.3.1.9</ecNumber>
    </recommendedName>
    <alternativeName>
        <fullName evidence="1">Phosphoglucose isomerase</fullName>
        <shortName evidence="1">PGI</shortName>
    </alternativeName>
    <alternativeName>
        <fullName evidence="1">Phosphohexose isomerase</fullName>
        <shortName evidence="1">PHI</shortName>
    </alternativeName>
</protein>
<feature type="chain" id="PRO_1000206364" description="Glucose-6-phosphate isomerase">
    <location>
        <begin position="1"/>
        <end position="549"/>
    </location>
</feature>
<feature type="active site" description="Proton donor" evidence="1">
    <location>
        <position position="355"/>
    </location>
</feature>
<feature type="active site" evidence="1">
    <location>
        <position position="386"/>
    </location>
</feature>
<feature type="active site" evidence="1">
    <location>
        <position position="514"/>
    </location>
</feature>
<feature type="modified residue" description="N6-acetyllysine" evidence="1">
    <location>
        <position position="80"/>
    </location>
</feature>
<feature type="modified residue" description="N6-acetyllysine" evidence="1">
    <location>
        <position position="228"/>
    </location>
</feature>
<feature type="modified residue" description="N6-acetyllysine" evidence="1">
    <location>
        <position position="234"/>
    </location>
</feature>
<evidence type="ECO:0000255" key="1">
    <source>
        <dbReference type="HAMAP-Rule" id="MF_00473"/>
    </source>
</evidence>
<organism>
    <name type="scientific">Escherichia coli (strain K12 / MC4100 / BW2952)</name>
    <dbReference type="NCBI Taxonomy" id="595496"/>
    <lineage>
        <taxon>Bacteria</taxon>
        <taxon>Pseudomonadati</taxon>
        <taxon>Pseudomonadota</taxon>
        <taxon>Gammaproteobacteria</taxon>
        <taxon>Enterobacterales</taxon>
        <taxon>Enterobacteriaceae</taxon>
        <taxon>Escherichia</taxon>
    </lineage>
</organism>
<keyword id="KW-0007">Acetylation</keyword>
<keyword id="KW-0963">Cytoplasm</keyword>
<keyword id="KW-0312">Gluconeogenesis</keyword>
<keyword id="KW-0324">Glycolysis</keyword>
<keyword id="KW-0413">Isomerase</keyword>
<sequence length="549" mass="61530">MKNINPTQTAAWQALQKHFDEMKDVTIADLFAKDGDRFSKFSATFDDQMLVDYSKNRITEETLAKLQDLAKECDLAGAIKSMFSGEKINRTENRAVLHVALRNRSNTPILVDGKDVMPEVNAVLEKMKTFSEAIISGEWKGYTGKAITDVVNIGIGGSDLGPYMVTEALRPYKNHLNMHFVSNVDGTHIAEVLKKVNPETTLFLVASKTFTTQETMTNAHSARDWFLKAAGDEKHVAKHFAALSTNAKAVGEFGIDTANMFEFWDWVGGRYSLWSAIGLSIVLSIGFDNFVELLSGAHAMDKHFSTTPAEKNLPVLLALIGIWYNNFFGAETEAILPYDQYMHRFAAYFQQGNMESNGKYVDRNGNVVDYQTGPIIWGEPGTNGQHAFYQLIHQGTKMVPCDFIAPAITHNPLSDHHQKLLSNFFAQTEALAFGKSREVVEQEYRDQGKDPATLDYVVPFKVFEGNRPTNSILLREITPFSLGALIALYEHKIFTQGVILNIFTFDQWGVELGKQLANRILPELKDDKEISSHDSSTNGLINRYKAWRG</sequence>